<name>COAT_STMV</name>
<keyword id="KW-0002">3D-structure</keyword>
<keyword id="KW-0167">Capsid protein</keyword>
<keyword id="KW-0946">Virion</keyword>
<organism>
    <name type="scientific">Satellite tobacco mosaic virus</name>
    <name type="common">STMV</name>
    <dbReference type="NCBI Taxonomy" id="12881"/>
    <lineage>
        <taxon>Viruses</taxon>
        <taxon>Riboviria</taxon>
        <taxon>Virtovirus</taxon>
        <taxon>Tobacco virtovirus 1</taxon>
    </lineage>
</organism>
<accession>P17574</accession>
<reference key="1">
    <citation type="journal article" date="1989" name="Virology">
        <title>Nucleotide sequence and translation of satellite tobacco mosaic virus RNA.</title>
        <authorList>
            <person name="Mirkov T.E."/>
            <person name="Mathews D.M."/>
            <person name="du Plessis D.H."/>
            <person name="Dodds J.A."/>
        </authorList>
    </citation>
    <scope>NUCLEOTIDE SEQUENCE [GENOMIC RNA]</scope>
</reference>
<reference key="2">
    <citation type="journal article" date="1998" name="J. Mol. Biol.">
        <title>Refined structure of satellite tobacco mosaic virus at 1.8-A resolution.</title>
        <authorList>
            <person name="Larson S.B."/>
            <person name="Day J."/>
            <person name="Greenwood A."/>
            <person name="McPherson A."/>
        </authorList>
    </citation>
    <scope>X-RAY CRYSTALLOGRAPHY (1.81 ANGSTROMS)</scope>
</reference>
<organismHost>
    <name type="scientific">Nicotiana glauca</name>
    <name type="common">Glaucous tobacco</name>
    <name type="synonym">Tree tobacco</name>
    <dbReference type="NCBI Taxonomy" id="4090"/>
</organismHost>
<sequence length="159" mass="17514">MGRGKVKPNRKSTGDNSNVVTMIRAGSYPKVNPTPTWVRAIPFEVSVQSGIAFKVPVGSLFSANFRTDSFTSVTVMSVRAWTQLTPPVNEYSFVRLKPLFKTGDSTEEFEGRASNINTRASVGYRIPTNLRQNTVAADNVCEVRSNCRQVALVISCCFN</sequence>
<dbReference type="EMBL" id="M25782">
    <property type="protein sequence ID" value="AAA47785.1"/>
    <property type="molecule type" value="Genomic_RNA"/>
</dbReference>
<dbReference type="PIR" id="JA0135">
    <property type="entry name" value="VCTMST"/>
</dbReference>
<dbReference type="PDB" id="1A34">
    <property type="method" value="X-ray"/>
    <property type="resolution" value="1.81 A"/>
    <property type="chains" value="A=1-159"/>
</dbReference>
<dbReference type="PDB" id="4NIA">
    <property type="method" value="X-ray"/>
    <property type="resolution" value="1.82 A"/>
    <property type="chains" value="A/B/C/D/E/F/G/H/I/J/K/L/M/N/O=1-159"/>
</dbReference>
<dbReference type="PDB" id="4OQ8">
    <property type="method" value="X-ray"/>
    <property type="resolution" value="1.45 A"/>
    <property type="chains" value="A=1-159"/>
</dbReference>
<dbReference type="PDB" id="4OQ9">
    <property type="method" value="X-ray"/>
    <property type="resolution" value="1.45 A"/>
    <property type="chains" value="A/B/C/D/E/F/G/H/I/J/K/L/M/N/O=1-159"/>
</dbReference>
<dbReference type="PDB" id="5BKL">
    <property type="method" value="X-ray"/>
    <property type="resolution" value="2.94 A"/>
    <property type="chains" value="A/B/C/D/E/F/G/GG/H/HH/I/II/J/JJ/K/KK/L/M/N/O=1-159"/>
</dbReference>
<dbReference type="PDB" id="5BKN">
    <property type="method" value="X-ray"/>
    <property type="resolution" value="3.00 A"/>
    <property type="chains" value="A/B/C/D/E/F/G/GG/H/HH/I/II/J/JJ/K/KK/L/M/N/O=1-159"/>
</dbReference>
<dbReference type="PDB" id="5BKQ">
    <property type="method" value="X-ray"/>
    <property type="resolution" value="3.19 A"/>
    <property type="chains" value="A/B/C/D/E/F/G/GG/H/HH/I/II/J/JJ/K/KK/L/M/N/O=1-159"/>
</dbReference>
<dbReference type="PDB" id="7M2T">
    <property type="method" value="X-ray"/>
    <property type="resolution" value="2.71 A"/>
    <property type="chains" value="A/B/BB/C/CC/D/DD/E/EE/F/FF/G/GG/H/HH/I/II/J/JJ/K/KK/L/LL/M/MM/N/NN/O/OO/PP=1-159"/>
</dbReference>
<dbReference type="PDB" id="7M2V">
    <property type="method" value="X-ray"/>
    <property type="resolution" value="1.80 A"/>
    <property type="chains" value="A/B/C/D/E/FX/G/GG/H/HH/I/II/J/JJ/K/KK/L/M/NN/O=1-159"/>
</dbReference>
<dbReference type="PDB" id="7M3R">
    <property type="method" value="X-ray"/>
    <property type="resolution" value="2.10 A"/>
    <property type="chains" value="A/B/C/D/E/F/G/GG/H/HH/I/II/J/JJ/K/KK/L/M/N/O=1-159"/>
</dbReference>
<dbReference type="PDB" id="7M3T">
    <property type="method" value="X-ray"/>
    <property type="resolution" value="3.20 A"/>
    <property type="chains" value="A/B/C/D/E/F/G/GG/H/HH/I/II/J/JJ/K/KK/L/M/N/O=1-159"/>
</dbReference>
<dbReference type="PDB" id="7M50">
    <property type="method" value="X-ray"/>
    <property type="resolution" value="2.31 A"/>
    <property type="chains" value="A/B/C/D/E/F/G/GG/H/HH/I/II/J/JJ/K/KK/L/M/N/O=1-159"/>
</dbReference>
<dbReference type="PDB" id="7M54">
    <property type="method" value="X-ray"/>
    <property type="resolution" value="3.80 A"/>
    <property type="chains" value="A/B/C/D/E/F/G/GG/H/HH/I/II/J/JJ/K/KK/L/M/N/O=1-159"/>
</dbReference>
<dbReference type="PDB" id="7M57">
    <property type="method" value="X-ray"/>
    <property type="resolution" value="4.00 A"/>
    <property type="chains" value="A/B/BB/C/CC/D/DD/E/EE/F/FF/G/GG/H/HH/I/II/J/JJ/K/KK/L/LL/M/MM/N/NN/O/OO/PP=1-159"/>
</dbReference>
<dbReference type="PDBsum" id="1A34"/>
<dbReference type="PDBsum" id="4NIA"/>
<dbReference type="PDBsum" id="4OQ8"/>
<dbReference type="PDBsum" id="4OQ9"/>
<dbReference type="PDBsum" id="5BKL"/>
<dbReference type="PDBsum" id="5BKN"/>
<dbReference type="PDBsum" id="5BKQ"/>
<dbReference type="PDBsum" id="7M2T"/>
<dbReference type="PDBsum" id="7M2V"/>
<dbReference type="PDBsum" id="7M3R"/>
<dbReference type="PDBsum" id="7M3T"/>
<dbReference type="PDBsum" id="7M50"/>
<dbReference type="PDBsum" id="7M54"/>
<dbReference type="PDBsum" id="7M57"/>
<dbReference type="SMR" id="P17574"/>
<dbReference type="EvolutionaryTrace" id="P17574"/>
<dbReference type="Proteomes" id="UP000232931">
    <property type="component" value="Segment"/>
</dbReference>
<dbReference type="GO" id="GO:0019028">
    <property type="term" value="C:viral capsid"/>
    <property type="evidence" value="ECO:0007669"/>
    <property type="project" value="UniProtKB-KW"/>
</dbReference>
<dbReference type="GO" id="GO:0005198">
    <property type="term" value="F:structural molecule activity"/>
    <property type="evidence" value="ECO:0007669"/>
    <property type="project" value="InterPro"/>
</dbReference>
<dbReference type="Gene3D" id="2.60.120.220">
    <property type="entry name" value="Satellite virus coat domain"/>
    <property type="match status" value="1"/>
</dbReference>
<dbReference type="InterPro" id="IPR037164">
    <property type="entry name" value="Satellite_virus_coat_sf"/>
</dbReference>
<dbReference type="SUPFAM" id="SSF88650">
    <property type="entry name" value="Satellite viruses"/>
    <property type="match status" value="1"/>
</dbReference>
<evidence type="ECO:0000305" key="1"/>
<evidence type="ECO:0007829" key="2">
    <source>
        <dbReference type="PDB" id="4OQ8"/>
    </source>
</evidence>
<evidence type="ECO:0007829" key="3">
    <source>
        <dbReference type="PDB" id="4OQ9"/>
    </source>
</evidence>
<feature type="chain" id="PRO_0000222498" description="Coat protein">
    <location>
        <begin position="1"/>
        <end position="159"/>
    </location>
</feature>
<feature type="strand" evidence="3">
    <location>
        <begin position="21"/>
        <end position="23"/>
    </location>
</feature>
<feature type="strand" evidence="2">
    <location>
        <begin position="37"/>
        <end position="46"/>
    </location>
</feature>
<feature type="strand" evidence="2">
    <location>
        <begin position="53"/>
        <end position="56"/>
    </location>
</feature>
<feature type="helix" evidence="2">
    <location>
        <begin position="57"/>
        <end position="60"/>
    </location>
</feature>
<feature type="helix" evidence="2">
    <location>
        <begin position="63"/>
        <end position="65"/>
    </location>
</feature>
<feature type="strand" evidence="2">
    <location>
        <begin position="71"/>
        <end position="82"/>
    </location>
</feature>
<feature type="strand" evidence="2">
    <location>
        <begin position="93"/>
        <end position="98"/>
    </location>
</feature>
<feature type="strand" evidence="2">
    <location>
        <begin position="109"/>
        <end position="112"/>
    </location>
</feature>
<feature type="strand" evidence="2">
    <location>
        <begin position="121"/>
        <end position="125"/>
    </location>
</feature>
<feature type="helix" evidence="2">
    <location>
        <begin position="128"/>
        <end position="130"/>
    </location>
</feature>
<feature type="strand" evidence="2">
    <location>
        <begin position="138"/>
        <end position="159"/>
    </location>
</feature>
<proteinExistence type="evidence at protein level"/>
<protein>
    <recommendedName>
        <fullName>Coat protein</fullName>
    </recommendedName>
</protein>
<comment type="subcellular location">
    <subcellularLocation>
        <location evidence="1">Virion</location>
    </subcellularLocation>
</comment>
<comment type="miscellaneous">
    <text>This virus depends on tobacco mosaic virus for its replication.</text>
</comment>
<comment type="online information" name="Virus Particle ExploreR db">
    <link uri="https://viperdb.org/Info_Page.php?VDB=1a34"/>
    <text>Icosahedral capsid structure</text>
</comment>